<sequence>MPMSLGNAFIKNFLGKAPDWYKVAIISFLIINPIVFFFVDPFVAGWLLVVEFIFTLAMALKCYPLQPGGLLAIEAIAIGMTSPEQVKHELVANIEVLLLLVFMVAGIYFMKQLLLFIFTKILLGIRSKAILSLAFCFAAAFLSAFLDALTVIAVVISVAVGFYSIYHKVASGKGVSSDHDHTQDDHLAELTRDDLENYRAFLRSLLMHAGVGTALGGVTTMVGEPQNLIIADQASWLFGEFLIRMAPVTLPVFVCGLLTCFAVEKLKVFGYGAELPDNVRHILVEFDKEERKARTNQDVAKLWIQGLIAVWLIVGLALHLAAVGLIGLSVIILATAFTGVIEEHSLGKAFEEALPFTALLAVFFSIVAVIIDQELFKPVIDAVLAVEDKGTQLAMFYVANGLLSMVSDNVFVGTVYINEVKTALVEGIITRDQFDLLAVAINTGTNLPSVATPNGQAAFLFLLTSALAPLIRLSYGKMVIMALPYTIVLALVGLFGIVFLLEPMTTWFYDAGWIAHHVGEATHAVSGGH</sequence>
<organism>
    <name type="scientific">Vibrio vulnificus (strain YJ016)</name>
    <dbReference type="NCBI Taxonomy" id="196600"/>
    <lineage>
        <taxon>Bacteria</taxon>
        <taxon>Pseudomonadati</taxon>
        <taxon>Pseudomonadota</taxon>
        <taxon>Gammaproteobacteria</taxon>
        <taxon>Vibrionales</taxon>
        <taxon>Vibrionaceae</taxon>
        <taxon>Vibrio</taxon>
    </lineage>
</organism>
<keyword id="KW-0050">Antiport</keyword>
<keyword id="KW-0997">Cell inner membrane</keyword>
<keyword id="KW-1003">Cell membrane</keyword>
<keyword id="KW-0406">Ion transport</keyword>
<keyword id="KW-0472">Membrane</keyword>
<keyword id="KW-0915">Sodium</keyword>
<keyword id="KW-0739">Sodium transport</keyword>
<keyword id="KW-0812">Transmembrane</keyword>
<keyword id="KW-1133">Transmembrane helix</keyword>
<keyword id="KW-0813">Transport</keyword>
<feature type="chain" id="PRO_0000333151" description="Na(+)/H(+) antiporter NhaB">
    <location>
        <begin position="1"/>
        <end position="529"/>
    </location>
</feature>
<feature type="transmembrane region" description="Helical" evidence="1">
    <location>
        <begin position="13"/>
        <end position="33"/>
    </location>
</feature>
<feature type="transmembrane region" description="Helical" evidence="1">
    <location>
        <begin position="34"/>
        <end position="54"/>
    </location>
</feature>
<feature type="transmembrane region" description="Helical" evidence="1">
    <location>
        <begin position="90"/>
        <end position="110"/>
    </location>
</feature>
<feature type="transmembrane region" description="Helical" evidence="1">
    <location>
        <begin position="113"/>
        <end position="133"/>
    </location>
</feature>
<feature type="transmembrane region" description="Helical" evidence="1">
    <location>
        <begin position="149"/>
        <end position="166"/>
    </location>
</feature>
<feature type="transmembrane region" description="Helical" evidence="1">
    <location>
        <begin position="205"/>
        <end position="225"/>
    </location>
</feature>
<feature type="transmembrane region" description="Helical" evidence="1">
    <location>
        <begin position="241"/>
        <end position="261"/>
    </location>
</feature>
<feature type="transmembrane region" description="Helical" evidence="1">
    <location>
        <begin position="306"/>
        <end position="326"/>
    </location>
</feature>
<feature type="transmembrane region" description="Helical" evidence="1">
    <location>
        <begin position="327"/>
        <end position="347"/>
    </location>
</feature>
<feature type="transmembrane region" description="Helical" evidence="1">
    <location>
        <begin position="351"/>
        <end position="371"/>
    </location>
</feature>
<feature type="transmembrane region" description="Helical" evidence="1">
    <location>
        <begin position="451"/>
        <end position="471"/>
    </location>
</feature>
<feature type="transmembrane region" description="Helical" evidence="1">
    <location>
        <begin position="479"/>
        <end position="499"/>
    </location>
</feature>
<protein>
    <recommendedName>
        <fullName evidence="1">Na(+)/H(+) antiporter NhaB</fullName>
    </recommendedName>
    <alternativeName>
        <fullName evidence="1">Sodium/proton antiporter NhaB</fullName>
    </alternativeName>
</protein>
<evidence type="ECO:0000255" key="1">
    <source>
        <dbReference type="HAMAP-Rule" id="MF_01599"/>
    </source>
</evidence>
<proteinExistence type="inferred from homology"/>
<gene>
    <name evidence="1" type="primary">nhaB</name>
    <name type="ordered locus">VV2123</name>
</gene>
<accession>Q7MJN8</accession>
<dbReference type="EMBL" id="BA000037">
    <property type="protein sequence ID" value="BAC94887.1"/>
    <property type="molecule type" value="Genomic_DNA"/>
</dbReference>
<dbReference type="RefSeq" id="WP_011150643.1">
    <property type="nucleotide sequence ID" value="NC_005139.1"/>
</dbReference>
<dbReference type="SMR" id="Q7MJN8"/>
<dbReference type="STRING" id="672.VV93_v1c18860"/>
<dbReference type="KEGG" id="vvy:VV2123"/>
<dbReference type="PATRIC" id="fig|196600.6.peg.2146"/>
<dbReference type="eggNOG" id="COG3067">
    <property type="taxonomic scope" value="Bacteria"/>
</dbReference>
<dbReference type="HOGENOM" id="CLU_041110_0_0_6"/>
<dbReference type="Proteomes" id="UP000002675">
    <property type="component" value="Chromosome I"/>
</dbReference>
<dbReference type="GO" id="GO:0005886">
    <property type="term" value="C:plasma membrane"/>
    <property type="evidence" value="ECO:0007669"/>
    <property type="project" value="UniProtKB-SubCell"/>
</dbReference>
<dbReference type="GO" id="GO:0015385">
    <property type="term" value="F:sodium:proton antiporter activity"/>
    <property type="evidence" value="ECO:0007669"/>
    <property type="project" value="InterPro"/>
</dbReference>
<dbReference type="HAMAP" id="MF_01599">
    <property type="entry name" value="NhaB"/>
    <property type="match status" value="1"/>
</dbReference>
<dbReference type="InterPro" id="IPR004671">
    <property type="entry name" value="Na+/H+_antiporter_NhaB"/>
</dbReference>
<dbReference type="NCBIfam" id="TIGR00774">
    <property type="entry name" value="NhaB"/>
    <property type="match status" value="1"/>
</dbReference>
<dbReference type="NCBIfam" id="NF007093">
    <property type="entry name" value="PRK09547.1"/>
    <property type="match status" value="1"/>
</dbReference>
<dbReference type="PANTHER" id="PTHR43302:SF1">
    <property type="entry name" value="NA(+)_H(+) ANTIPORTER NHAB"/>
    <property type="match status" value="1"/>
</dbReference>
<dbReference type="PANTHER" id="PTHR43302">
    <property type="entry name" value="TRANSPORTER ARSB-RELATED"/>
    <property type="match status" value="1"/>
</dbReference>
<dbReference type="Pfam" id="PF06450">
    <property type="entry name" value="NhaB"/>
    <property type="match status" value="1"/>
</dbReference>
<name>NHAB_VIBVY</name>
<comment type="function">
    <text evidence="1">Na(+)/H(+) antiporter that extrudes sodium in exchange for external protons.</text>
</comment>
<comment type="catalytic activity">
    <reaction evidence="1">
        <text>2 Na(+)(in) + 3 H(+)(out) = 2 Na(+)(out) + 3 H(+)(in)</text>
        <dbReference type="Rhea" id="RHEA:29247"/>
        <dbReference type="ChEBI" id="CHEBI:15378"/>
        <dbReference type="ChEBI" id="CHEBI:29101"/>
    </reaction>
    <physiologicalReaction direction="left-to-right" evidence="1">
        <dbReference type="Rhea" id="RHEA:29248"/>
    </physiologicalReaction>
</comment>
<comment type="subcellular location">
    <subcellularLocation>
        <location evidence="1">Cell inner membrane</location>
        <topology evidence="1">Multi-pass membrane protein</topology>
    </subcellularLocation>
</comment>
<comment type="similarity">
    <text evidence="1">Belongs to the NhaB Na(+)/H(+) (TC 2.A.34) antiporter family.</text>
</comment>
<reference key="1">
    <citation type="journal article" date="2003" name="Genome Res.">
        <title>Comparative genome analysis of Vibrio vulnificus, a marine pathogen.</title>
        <authorList>
            <person name="Chen C.-Y."/>
            <person name="Wu K.-M."/>
            <person name="Chang Y.-C."/>
            <person name="Chang C.-H."/>
            <person name="Tsai H.-C."/>
            <person name="Liao T.-L."/>
            <person name="Liu Y.-M."/>
            <person name="Chen H.-J."/>
            <person name="Shen A.B.-T."/>
            <person name="Li J.-C."/>
            <person name="Su T.-L."/>
            <person name="Shao C.-P."/>
            <person name="Lee C.-T."/>
            <person name="Hor L.-I."/>
            <person name="Tsai S.-F."/>
        </authorList>
    </citation>
    <scope>NUCLEOTIDE SEQUENCE [LARGE SCALE GENOMIC DNA]</scope>
    <source>
        <strain>YJ016</strain>
    </source>
</reference>